<reference key="1">
    <citation type="journal article" date="2008" name="DNA Res.">
        <title>Comparative genome analysis of Lactobacillus reuteri and Lactobacillus fermentum reveal a genomic island for reuterin and cobalamin production.</title>
        <authorList>
            <person name="Morita H."/>
            <person name="Toh H."/>
            <person name="Fukuda S."/>
            <person name="Horikawa H."/>
            <person name="Oshima K."/>
            <person name="Suzuki T."/>
            <person name="Murakami M."/>
            <person name="Hisamatsu S."/>
            <person name="Kato Y."/>
            <person name="Takizawa T."/>
            <person name="Fukuoka H."/>
            <person name="Yoshimura T."/>
            <person name="Itoh K."/>
            <person name="O'Sullivan D.J."/>
            <person name="McKay L.L."/>
            <person name="Ohno H."/>
            <person name="Kikuchi J."/>
            <person name="Masaoka T."/>
            <person name="Hattori M."/>
        </authorList>
    </citation>
    <scope>NUCLEOTIDE SEQUENCE [LARGE SCALE GENOMIC DNA]</scope>
    <source>
        <strain>NBRC 3956 / LMG 18251</strain>
    </source>
</reference>
<feature type="chain" id="PRO_1000137699" description="Chaperone protein DnaJ">
    <location>
        <begin position="1"/>
        <end position="386"/>
    </location>
</feature>
<feature type="domain" description="J" evidence="1">
    <location>
        <begin position="5"/>
        <end position="69"/>
    </location>
</feature>
<feature type="repeat" description="CXXCXGXG motif">
    <location>
        <begin position="153"/>
        <end position="160"/>
    </location>
</feature>
<feature type="repeat" description="CXXCXGXG motif">
    <location>
        <begin position="170"/>
        <end position="177"/>
    </location>
</feature>
<feature type="repeat" description="CXXCXGXG motif">
    <location>
        <begin position="196"/>
        <end position="203"/>
    </location>
</feature>
<feature type="repeat" description="CXXCXGXG motif">
    <location>
        <begin position="212"/>
        <end position="219"/>
    </location>
</feature>
<feature type="zinc finger region" description="CR-type" evidence="1">
    <location>
        <begin position="140"/>
        <end position="224"/>
    </location>
</feature>
<feature type="binding site" evidence="1">
    <location>
        <position position="153"/>
    </location>
    <ligand>
        <name>Zn(2+)</name>
        <dbReference type="ChEBI" id="CHEBI:29105"/>
        <label>1</label>
    </ligand>
</feature>
<feature type="binding site" evidence="1">
    <location>
        <position position="156"/>
    </location>
    <ligand>
        <name>Zn(2+)</name>
        <dbReference type="ChEBI" id="CHEBI:29105"/>
        <label>1</label>
    </ligand>
</feature>
<feature type="binding site" evidence="1">
    <location>
        <position position="170"/>
    </location>
    <ligand>
        <name>Zn(2+)</name>
        <dbReference type="ChEBI" id="CHEBI:29105"/>
        <label>2</label>
    </ligand>
</feature>
<feature type="binding site" evidence="1">
    <location>
        <position position="173"/>
    </location>
    <ligand>
        <name>Zn(2+)</name>
        <dbReference type="ChEBI" id="CHEBI:29105"/>
        <label>2</label>
    </ligand>
</feature>
<feature type="binding site" evidence="1">
    <location>
        <position position="196"/>
    </location>
    <ligand>
        <name>Zn(2+)</name>
        <dbReference type="ChEBI" id="CHEBI:29105"/>
        <label>2</label>
    </ligand>
</feature>
<feature type="binding site" evidence="1">
    <location>
        <position position="199"/>
    </location>
    <ligand>
        <name>Zn(2+)</name>
        <dbReference type="ChEBI" id="CHEBI:29105"/>
        <label>2</label>
    </ligand>
</feature>
<feature type="binding site" evidence="1">
    <location>
        <position position="212"/>
    </location>
    <ligand>
        <name>Zn(2+)</name>
        <dbReference type="ChEBI" id="CHEBI:29105"/>
        <label>1</label>
    </ligand>
</feature>
<feature type="binding site" evidence="1">
    <location>
        <position position="215"/>
    </location>
    <ligand>
        <name>Zn(2+)</name>
        <dbReference type="ChEBI" id="CHEBI:29105"/>
        <label>1</label>
    </ligand>
</feature>
<organism>
    <name type="scientific">Limosilactobacillus fermentum (strain NBRC 3956 / LMG 18251)</name>
    <name type="common">Lactobacillus fermentum</name>
    <dbReference type="NCBI Taxonomy" id="334390"/>
    <lineage>
        <taxon>Bacteria</taxon>
        <taxon>Bacillati</taxon>
        <taxon>Bacillota</taxon>
        <taxon>Bacilli</taxon>
        <taxon>Lactobacillales</taxon>
        <taxon>Lactobacillaceae</taxon>
        <taxon>Limosilactobacillus</taxon>
    </lineage>
</organism>
<dbReference type="EMBL" id="AP008937">
    <property type="protein sequence ID" value="BAG27088.1"/>
    <property type="molecule type" value="Genomic_DNA"/>
</dbReference>
<dbReference type="RefSeq" id="WP_003681899.1">
    <property type="nucleotide sequence ID" value="NC_010610.1"/>
</dbReference>
<dbReference type="SMR" id="B2GBQ6"/>
<dbReference type="KEGG" id="lfe:LAF_0752"/>
<dbReference type="eggNOG" id="COG0484">
    <property type="taxonomic scope" value="Bacteria"/>
</dbReference>
<dbReference type="HOGENOM" id="CLU_017633_0_7_9"/>
<dbReference type="Proteomes" id="UP000001697">
    <property type="component" value="Chromosome"/>
</dbReference>
<dbReference type="GO" id="GO:0005737">
    <property type="term" value="C:cytoplasm"/>
    <property type="evidence" value="ECO:0007669"/>
    <property type="project" value="UniProtKB-SubCell"/>
</dbReference>
<dbReference type="GO" id="GO:0005524">
    <property type="term" value="F:ATP binding"/>
    <property type="evidence" value="ECO:0007669"/>
    <property type="project" value="InterPro"/>
</dbReference>
<dbReference type="GO" id="GO:0031072">
    <property type="term" value="F:heat shock protein binding"/>
    <property type="evidence" value="ECO:0007669"/>
    <property type="project" value="InterPro"/>
</dbReference>
<dbReference type="GO" id="GO:0051082">
    <property type="term" value="F:unfolded protein binding"/>
    <property type="evidence" value="ECO:0007669"/>
    <property type="project" value="UniProtKB-UniRule"/>
</dbReference>
<dbReference type="GO" id="GO:0008270">
    <property type="term" value="F:zinc ion binding"/>
    <property type="evidence" value="ECO:0007669"/>
    <property type="project" value="UniProtKB-UniRule"/>
</dbReference>
<dbReference type="GO" id="GO:0051085">
    <property type="term" value="P:chaperone cofactor-dependent protein refolding"/>
    <property type="evidence" value="ECO:0007669"/>
    <property type="project" value="TreeGrafter"/>
</dbReference>
<dbReference type="GO" id="GO:0006260">
    <property type="term" value="P:DNA replication"/>
    <property type="evidence" value="ECO:0007669"/>
    <property type="project" value="UniProtKB-KW"/>
</dbReference>
<dbReference type="GO" id="GO:0042026">
    <property type="term" value="P:protein refolding"/>
    <property type="evidence" value="ECO:0007669"/>
    <property type="project" value="TreeGrafter"/>
</dbReference>
<dbReference type="GO" id="GO:0009408">
    <property type="term" value="P:response to heat"/>
    <property type="evidence" value="ECO:0007669"/>
    <property type="project" value="InterPro"/>
</dbReference>
<dbReference type="CDD" id="cd06257">
    <property type="entry name" value="DnaJ"/>
    <property type="match status" value="1"/>
</dbReference>
<dbReference type="CDD" id="cd10747">
    <property type="entry name" value="DnaJ_C"/>
    <property type="match status" value="1"/>
</dbReference>
<dbReference type="CDD" id="cd10719">
    <property type="entry name" value="DnaJ_zf"/>
    <property type="match status" value="1"/>
</dbReference>
<dbReference type="FunFam" id="2.60.260.20:FF:000005">
    <property type="entry name" value="Chaperone protein dnaJ 1, mitochondrial"/>
    <property type="match status" value="1"/>
</dbReference>
<dbReference type="FunFam" id="1.10.287.110:FF:000031">
    <property type="entry name" value="Molecular chaperone DnaJ"/>
    <property type="match status" value="1"/>
</dbReference>
<dbReference type="FunFam" id="2.10.230.10:FF:000002">
    <property type="entry name" value="Molecular chaperone DnaJ"/>
    <property type="match status" value="1"/>
</dbReference>
<dbReference type="Gene3D" id="1.10.287.110">
    <property type="entry name" value="DnaJ domain"/>
    <property type="match status" value="1"/>
</dbReference>
<dbReference type="Gene3D" id="2.10.230.10">
    <property type="entry name" value="Heat shock protein DnaJ, cysteine-rich domain"/>
    <property type="match status" value="1"/>
</dbReference>
<dbReference type="Gene3D" id="2.60.260.20">
    <property type="entry name" value="Urease metallochaperone UreE, N-terminal domain"/>
    <property type="match status" value="2"/>
</dbReference>
<dbReference type="HAMAP" id="MF_01152">
    <property type="entry name" value="DnaJ"/>
    <property type="match status" value="1"/>
</dbReference>
<dbReference type="InterPro" id="IPR012724">
    <property type="entry name" value="DnaJ"/>
</dbReference>
<dbReference type="InterPro" id="IPR002939">
    <property type="entry name" value="DnaJ_C"/>
</dbReference>
<dbReference type="InterPro" id="IPR001623">
    <property type="entry name" value="DnaJ_domain"/>
</dbReference>
<dbReference type="InterPro" id="IPR018253">
    <property type="entry name" value="DnaJ_domain_CS"/>
</dbReference>
<dbReference type="InterPro" id="IPR008971">
    <property type="entry name" value="HSP40/DnaJ_pept-bd"/>
</dbReference>
<dbReference type="InterPro" id="IPR001305">
    <property type="entry name" value="HSP_DnaJ_Cys-rich_dom"/>
</dbReference>
<dbReference type="InterPro" id="IPR036410">
    <property type="entry name" value="HSP_DnaJ_Cys-rich_dom_sf"/>
</dbReference>
<dbReference type="InterPro" id="IPR036869">
    <property type="entry name" value="J_dom_sf"/>
</dbReference>
<dbReference type="NCBIfam" id="TIGR02349">
    <property type="entry name" value="DnaJ_bact"/>
    <property type="match status" value="1"/>
</dbReference>
<dbReference type="NCBIfam" id="NF008035">
    <property type="entry name" value="PRK10767.1"/>
    <property type="match status" value="1"/>
</dbReference>
<dbReference type="NCBIfam" id="NF010869">
    <property type="entry name" value="PRK14276.1"/>
    <property type="match status" value="1"/>
</dbReference>
<dbReference type="PANTHER" id="PTHR43096:SF48">
    <property type="entry name" value="CHAPERONE PROTEIN DNAJ"/>
    <property type="match status" value="1"/>
</dbReference>
<dbReference type="PANTHER" id="PTHR43096">
    <property type="entry name" value="DNAJ HOMOLOG 1, MITOCHONDRIAL-RELATED"/>
    <property type="match status" value="1"/>
</dbReference>
<dbReference type="Pfam" id="PF00226">
    <property type="entry name" value="DnaJ"/>
    <property type="match status" value="1"/>
</dbReference>
<dbReference type="Pfam" id="PF01556">
    <property type="entry name" value="DnaJ_C"/>
    <property type="match status" value="1"/>
</dbReference>
<dbReference type="Pfam" id="PF00684">
    <property type="entry name" value="DnaJ_CXXCXGXG"/>
    <property type="match status" value="1"/>
</dbReference>
<dbReference type="PRINTS" id="PR00625">
    <property type="entry name" value="JDOMAIN"/>
</dbReference>
<dbReference type="SMART" id="SM00271">
    <property type="entry name" value="DnaJ"/>
    <property type="match status" value="1"/>
</dbReference>
<dbReference type="SUPFAM" id="SSF46565">
    <property type="entry name" value="Chaperone J-domain"/>
    <property type="match status" value="1"/>
</dbReference>
<dbReference type="SUPFAM" id="SSF57938">
    <property type="entry name" value="DnaJ/Hsp40 cysteine-rich domain"/>
    <property type="match status" value="1"/>
</dbReference>
<dbReference type="SUPFAM" id="SSF49493">
    <property type="entry name" value="HSP40/DnaJ peptide-binding domain"/>
    <property type="match status" value="2"/>
</dbReference>
<dbReference type="PROSITE" id="PS00636">
    <property type="entry name" value="DNAJ_1"/>
    <property type="match status" value="1"/>
</dbReference>
<dbReference type="PROSITE" id="PS50076">
    <property type="entry name" value="DNAJ_2"/>
    <property type="match status" value="1"/>
</dbReference>
<dbReference type="PROSITE" id="PS51188">
    <property type="entry name" value="ZF_CR"/>
    <property type="match status" value="1"/>
</dbReference>
<gene>
    <name evidence="1" type="primary">dnaJ</name>
    <name type="ordered locus">LAF_0752</name>
</gene>
<keyword id="KW-0143">Chaperone</keyword>
<keyword id="KW-0963">Cytoplasm</keyword>
<keyword id="KW-0235">DNA replication</keyword>
<keyword id="KW-0479">Metal-binding</keyword>
<keyword id="KW-1185">Reference proteome</keyword>
<keyword id="KW-0677">Repeat</keyword>
<keyword id="KW-0346">Stress response</keyword>
<keyword id="KW-0862">Zinc</keyword>
<keyword id="KW-0863">Zinc-finger</keyword>
<sequence>MAEEDLYDVLGVKKDASEAEIKRAYRKLAAKYHPDVNHEPGAEKKFKKINEAYETLSDDQKRAQYDQFGTTGSQAGGFGGQGGFGGFGQGGFSQGGFGDFSDIFGDIFGGGRARRDPSAPQQGRDLQYTMTLDFMDAVFGKETSIKYNRSAECHTCHGSGAKPGKSAHTCSTCHGQGYVLRQRQTMMGMMQSQEVCPTCGGKGQVIDPADQCDTCHGAGVTEERHELKVKVPQGIDDGQQMRLQGQGEAGKNGGPYGDLYIVFRVTPSRDFKRDGNTIYVDQDISISQATLGDHVQAKTVHGDVDLKIPAGTQSETKFRLRGKGVPRVNGNGNGDEYVTVHVKTPKTLNKRQREAMLAFAAASGEDVKGVKAGFFDKLKDAFEDNK</sequence>
<accession>B2GBQ6</accession>
<proteinExistence type="inferred from homology"/>
<name>DNAJ_LIMF3</name>
<evidence type="ECO:0000255" key="1">
    <source>
        <dbReference type="HAMAP-Rule" id="MF_01152"/>
    </source>
</evidence>
<protein>
    <recommendedName>
        <fullName evidence="1">Chaperone protein DnaJ</fullName>
    </recommendedName>
</protein>
<comment type="function">
    <text evidence="1">Participates actively in the response to hyperosmotic and heat shock by preventing the aggregation of stress-denatured proteins and by disaggregating proteins, also in an autonomous, DnaK-independent fashion. Unfolded proteins bind initially to DnaJ; upon interaction with the DnaJ-bound protein, DnaK hydrolyzes its bound ATP, resulting in the formation of a stable complex. GrpE releases ADP from DnaK; ATP binding to DnaK triggers the release of the substrate protein, thus completing the reaction cycle. Several rounds of ATP-dependent interactions between DnaJ, DnaK and GrpE are required for fully efficient folding. Also involved, together with DnaK and GrpE, in the DNA replication of plasmids through activation of initiation proteins.</text>
</comment>
<comment type="cofactor">
    <cofactor evidence="1">
        <name>Zn(2+)</name>
        <dbReference type="ChEBI" id="CHEBI:29105"/>
    </cofactor>
    <text evidence="1">Binds 2 Zn(2+) ions per monomer.</text>
</comment>
<comment type="subunit">
    <text evidence="1">Homodimer.</text>
</comment>
<comment type="subcellular location">
    <subcellularLocation>
        <location evidence="1">Cytoplasm</location>
    </subcellularLocation>
</comment>
<comment type="domain">
    <text evidence="1">The J domain is necessary and sufficient to stimulate DnaK ATPase activity. Zinc center 1 plays an important role in the autonomous, DnaK-independent chaperone activity of DnaJ. Zinc center 2 is essential for interaction with DnaK and for DnaJ activity.</text>
</comment>
<comment type="similarity">
    <text evidence="1">Belongs to the DnaJ family.</text>
</comment>